<feature type="chain" id="PRO_1000003305" description="Ribosome-recycling factor">
    <location>
        <begin position="1"/>
        <end position="185"/>
    </location>
</feature>
<name>RRF_HYDCU</name>
<accession>Q31G46</accession>
<organism>
    <name type="scientific">Hydrogenovibrio crunogenus (strain DSM 25203 / XCL-2)</name>
    <name type="common">Thiomicrospira crunogena</name>
    <dbReference type="NCBI Taxonomy" id="317025"/>
    <lineage>
        <taxon>Bacteria</taxon>
        <taxon>Pseudomonadati</taxon>
        <taxon>Pseudomonadota</taxon>
        <taxon>Gammaproteobacteria</taxon>
        <taxon>Thiotrichales</taxon>
        <taxon>Piscirickettsiaceae</taxon>
        <taxon>Hydrogenovibrio</taxon>
    </lineage>
</organism>
<gene>
    <name evidence="1" type="primary">frr</name>
    <name type="ordered locus">Tcr_1282</name>
</gene>
<reference key="1">
    <citation type="journal article" date="2006" name="PLoS Biol.">
        <title>The genome of deep-sea vent chemolithoautotroph Thiomicrospira crunogena XCL-2.</title>
        <authorList>
            <person name="Scott K.M."/>
            <person name="Sievert S.M."/>
            <person name="Abril F.N."/>
            <person name="Ball L.A."/>
            <person name="Barrett C.J."/>
            <person name="Blake R.A."/>
            <person name="Boller A.J."/>
            <person name="Chain P.S.G."/>
            <person name="Clark J.A."/>
            <person name="Davis C.R."/>
            <person name="Detter C."/>
            <person name="Do K.F."/>
            <person name="Dobrinski K.P."/>
            <person name="Faza B.I."/>
            <person name="Fitzpatrick K.A."/>
            <person name="Freyermuth S.K."/>
            <person name="Harmer T.L."/>
            <person name="Hauser L.J."/>
            <person name="Huegler M."/>
            <person name="Kerfeld C.A."/>
            <person name="Klotz M.G."/>
            <person name="Kong W.W."/>
            <person name="Land M."/>
            <person name="Lapidus A."/>
            <person name="Larimer F.W."/>
            <person name="Longo D.L."/>
            <person name="Lucas S."/>
            <person name="Malfatti S.A."/>
            <person name="Massey S.E."/>
            <person name="Martin D.D."/>
            <person name="McCuddin Z."/>
            <person name="Meyer F."/>
            <person name="Moore J.L."/>
            <person name="Ocampo L.H. Jr."/>
            <person name="Paul J.H."/>
            <person name="Paulsen I.T."/>
            <person name="Reep D.K."/>
            <person name="Ren Q."/>
            <person name="Ross R.L."/>
            <person name="Sato P.Y."/>
            <person name="Thomas P."/>
            <person name="Tinkham L.E."/>
            <person name="Zeruth G.T."/>
        </authorList>
    </citation>
    <scope>NUCLEOTIDE SEQUENCE [LARGE SCALE GENOMIC DNA]</scope>
    <source>
        <strain>DSM 25203 / XCL-2</strain>
    </source>
</reference>
<protein>
    <recommendedName>
        <fullName evidence="1">Ribosome-recycling factor</fullName>
        <shortName evidence="1">RRF</shortName>
    </recommendedName>
    <alternativeName>
        <fullName evidence="1">Ribosome-releasing factor</fullName>
    </alternativeName>
</protein>
<dbReference type="EMBL" id="CP000109">
    <property type="protein sequence ID" value="ABB41877.1"/>
    <property type="molecule type" value="Genomic_DNA"/>
</dbReference>
<dbReference type="SMR" id="Q31G46"/>
<dbReference type="STRING" id="317025.Tcr_1282"/>
<dbReference type="KEGG" id="tcx:Tcr_1282"/>
<dbReference type="eggNOG" id="COG0233">
    <property type="taxonomic scope" value="Bacteria"/>
</dbReference>
<dbReference type="HOGENOM" id="CLU_073981_2_1_6"/>
<dbReference type="OrthoDB" id="9804006at2"/>
<dbReference type="GO" id="GO:0005829">
    <property type="term" value="C:cytosol"/>
    <property type="evidence" value="ECO:0007669"/>
    <property type="project" value="GOC"/>
</dbReference>
<dbReference type="GO" id="GO:0043023">
    <property type="term" value="F:ribosomal large subunit binding"/>
    <property type="evidence" value="ECO:0007669"/>
    <property type="project" value="TreeGrafter"/>
</dbReference>
<dbReference type="GO" id="GO:0002184">
    <property type="term" value="P:cytoplasmic translational termination"/>
    <property type="evidence" value="ECO:0007669"/>
    <property type="project" value="TreeGrafter"/>
</dbReference>
<dbReference type="CDD" id="cd00520">
    <property type="entry name" value="RRF"/>
    <property type="match status" value="1"/>
</dbReference>
<dbReference type="FunFam" id="1.10.132.20:FF:000001">
    <property type="entry name" value="Ribosome-recycling factor"/>
    <property type="match status" value="1"/>
</dbReference>
<dbReference type="FunFam" id="3.30.1360.40:FF:000001">
    <property type="entry name" value="Ribosome-recycling factor"/>
    <property type="match status" value="1"/>
</dbReference>
<dbReference type="Gene3D" id="3.30.1360.40">
    <property type="match status" value="1"/>
</dbReference>
<dbReference type="Gene3D" id="1.10.132.20">
    <property type="entry name" value="Ribosome-recycling factor"/>
    <property type="match status" value="1"/>
</dbReference>
<dbReference type="HAMAP" id="MF_00040">
    <property type="entry name" value="RRF"/>
    <property type="match status" value="1"/>
</dbReference>
<dbReference type="InterPro" id="IPR002661">
    <property type="entry name" value="Ribosome_recyc_fac"/>
</dbReference>
<dbReference type="InterPro" id="IPR023584">
    <property type="entry name" value="Ribosome_recyc_fac_dom"/>
</dbReference>
<dbReference type="InterPro" id="IPR036191">
    <property type="entry name" value="RRF_sf"/>
</dbReference>
<dbReference type="NCBIfam" id="TIGR00496">
    <property type="entry name" value="frr"/>
    <property type="match status" value="1"/>
</dbReference>
<dbReference type="PANTHER" id="PTHR20982:SF3">
    <property type="entry name" value="MITOCHONDRIAL RIBOSOME RECYCLING FACTOR PSEUDO 1"/>
    <property type="match status" value="1"/>
</dbReference>
<dbReference type="PANTHER" id="PTHR20982">
    <property type="entry name" value="RIBOSOME RECYCLING FACTOR"/>
    <property type="match status" value="1"/>
</dbReference>
<dbReference type="Pfam" id="PF01765">
    <property type="entry name" value="RRF"/>
    <property type="match status" value="1"/>
</dbReference>
<dbReference type="SUPFAM" id="SSF55194">
    <property type="entry name" value="Ribosome recycling factor, RRF"/>
    <property type="match status" value="1"/>
</dbReference>
<sequence>MIDEIFDDANDRMTKSVENLESNFAKIRTGRAHPSILDAVKVDYYGSEVPVSQVANVNVEDARTLTVQPWEQSMVSVVEKAIMTSDIGVNPVTTGNVMRIPMPPLTEERRKEFIKLAKSEAEQTKVAIRNIRRDANADFKNLNKDKEITDDELRQAEEQIQKATDEHVSQVDQMLAKKEESLMEI</sequence>
<comment type="function">
    <text evidence="1">Responsible for the release of ribosomes from messenger RNA at the termination of protein biosynthesis. May increase the efficiency of translation by recycling ribosomes from one round of translation to another.</text>
</comment>
<comment type="subcellular location">
    <subcellularLocation>
        <location evidence="1">Cytoplasm</location>
    </subcellularLocation>
</comment>
<comment type="similarity">
    <text evidence="1">Belongs to the RRF family.</text>
</comment>
<evidence type="ECO:0000255" key="1">
    <source>
        <dbReference type="HAMAP-Rule" id="MF_00040"/>
    </source>
</evidence>
<keyword id="KW-0963">Cytoplasm</keyword>
<keyword id="KW-0648">Protein biosynthesis</keyword>
<proteinExistence type="inferred from homology"/>